<name>RS10_HELPY</name>
<comment type="function">
    <text evidence="1">Involved in the binding of tRNA to the ribosomes.</text>
</comment>
<comment type="subunit">
    <text evidence="1">Part of the 30S ribosomal subunit.</text>
</comment>
<comment type="similarity">
    <text evidence="1">Belongs to the universal ribosomal protein uS10 family.</text>
</comment>
<gene>
    <name evidence="1" type="primary">rpsJ</name>
    <name type="ordered locus">HP_1320</name>
</gene>
<keyword id="KW-1185">Reference proteome</keyword>
<keyword id="KW-0687">Ribonucleoprotein</keyword>
<keyword id="KW-0689">Ribosomal protein</keyword>
<organism>
    <name type="scientific">Helicobacter pylori (strain ATCC 700392 / 26695)</name>
    <name type="common">Campylobacter pylori</name>
    <dbReference type="NCBI Taxonomy" id="85962"/>
    <lineage>
        <taxon>Bacteria</taxon>
        <taxon>Pseudomonadati</taxon>
        <taxon>Campylobacterota</taxon>
        <taxon>Epsilonproteobacteria</taxon>
        <taxon>Campylobacterales</taxon>
        <taxon>Helicobacteraceae</taxon>
        <taxon>Helicobacter</taxon>
    </lineage>
</organism>
<accession>P66328</accession>
<accession>P56017</accession>
<evidence type="ECO:0000255" key="1">
    <source>
        <dbReference type="HAMAP-Rule" id="MF_00508"/>
    </source>
</evidence>
<evidence type="ECO:0000305" key="2"/>
<dbReference type="EMBL" id="AE000511">
    <property type="protein sequence ID" value="AAD08359.1"/>
    <property type="molecule type" value="Genomic_DNA"/>
</dbReference>
<dbReference type="PIR" id="H64684">
    <property type="entry name" value="H64684"/>
</dbReference>
<dbReference type="RefSeq" id="NP_208112.1">
    <property type="nucleotide sequence ID" value="NC_000915.1"/>
</dbReference>
<dbReference type="RefSeq" id="WP_000411561.1">
    <property type="nucleotide sequence ID" value="NC_018939.1"/>
</dbReference>
<dbReference type="SMR" id="P66328"/>
<dbReference type="FunCoup" id="P66328">
    <property type="interactions" value="435"/>
</dbReference>
<dbReference type="IntAct" id="P66328">
    <property type="interactions" value="1"/>
</dbReference>
<dbReference type="STRING" id="85962.HP_1320"/>
<dbReference type="PaxDb" id="85962-C694_06815"/>
<dbReference type="EnsemblBacteria" id="AAD08359">
    <property type="protein sequence ID" value="AAD08359"/>
    <property type="gene ID" value="HP_1320"/>
</dbReference>
<dbReference type="GeneID" id="93237549"/>
<dbReference type="KEGG" id="heo:C694_06815"/>
<dbReference type="KEGG" id="hpy:HP_1320"/>
<dbReference type="PATRIC" id="fig|85962.47.peg.1414"/>
<dbReference type="eggNOG" id="COG0051">
    <property type="taxonomic scope" value="Bacteria"/>
</dbReference>
<dbReference type="InParanoid" id="P66328"/>
<dbReference type="OrthoDB" id="9804464at2"/>
<dbReference type="PhylomeDB" id="P66328"/>
<dbReference type="Proteomes" id="UP000000429">
    <property type="component" value="Chromosome"/>
</dbReference>
<dbReference type="GO" id="GO:0015935">
    <property type="term" value="C:small ribosomal subunit"/>
    <property type="evidence" value="ECO:0000318"/>
    <property type="project" value="GO_Central"/>
</dbReference>
<dbReference type="GO" id="GO:0003735">
    <property type="term" value="F:structural constituent of ribosome"/>
    <property type="evidence" value="ECO:0000318"/>
    <property type="project" value="GO_Central"/>
</dbReference>
<dbReference type="GO" id="GO:0000049">
    <property type="term" value="F:tRNA binding"/>
    <property type="evidence" value="ECO:0007669"/>
    <property type="project" value="UniProtKB-UniRule"/>
</dbReference>
<dbReference type="GO" id="GO:0006412">
    <property type="term" value="P:translation"/>
    <property type="evidence" value="ECO:0007669"/>
    <property type="project" value="UniProtKB-UniRule"/>
</dbReference>
<dbReference type="FunFam" id="3.30.70.600:FF:000003">
    <property type="entry name" value="30S ribosomal protein S10"/>
    <property type="match status" value="1"/>
</dbReference>
<dbReference type="Gene3D" id="3.30.70.600">
    <property type="entry name" value="Ribosomal protein S10 domain"/>
    <property type="match status" value="1"/>
</dbReference>
<dbReference type="HAMAP" id="MF_00508">
    <property type="entry name" value="Ribosomal_uS10"/>
    <property type="match status" value="1"/>
</dbReference>
<dbReference type="InterPro" id="IPR001848">
    <property type="entry name" value="Ribosomal_uS10"/>
</dbReference>
<dbReference type="InterPro" id="IPR018268">
    <property type="entry name" value="Ribosomal_uS10_CS"/>
</dbReference>
<dbReference type="InterPro" id="IPR027486">
    <property type="entry name" value="Ribosomal_uS10_dom"/>
</dbReference>
<dbReference type="InterPro" id="IPR036838">
    <property type="entry name" value="Ribosomal_uS10_dom_sf"/>
</dbReference>
<dbReference type="NCBIfam" id="NF001861">
    <property type="entry name" value="PRK00596.1"/>
    <property type="match status" value="1"/>
</dbReference>
<dbReference type="NCBIfam" id="TIGR01049">
    <property type="entry name" value="rpsJ_bact"/>
    <property type="match status" value="1"/>
</dbReference>
<dbReference type="PANTHER" id="PTHR11700">
    <property type="entry name" value="30S RIBOSOMAL PROTEIN S10 FAMILY MEMBER"/>
    <property type="match status" value="1"/>
</dbReference>
<dbReference type="Pfam" id="PF00338">
    <property type="entry name" value="Ribosomal_S10"/>
    <property type="match status" value="1"/>
</dbReference>
<dbReference type="PRINTS" id="PR00971">
    <property type="entry name" value="RIBOSOMALS10"/>
</dbReference>
<dbReference type="SMART" id="SM01403">
    <property type="entry name" value="Ribosomal_S10"/>
    <property type="match status" value="1"/>
</dbReference>
<dbReference type="SUPFAM" id="SSF54999">
    <property type="entry name" value="Ribosomal protein S10"/>
    <property type="match status" value="1"/>
</dbReference>
<dbReference type="PROSITE" id="PS00361">
    <property type="entry name" value="RIBOSOMAL_S10"/>
    <property type="match status" value="1"/>
</dbReference>
<protein>
    <recommendedName>
        <fullName evidence="1">Small ribosomal subunit protein uS10</fullName>
    </recommendedName>
    <alternativeName>
        <fullName evidence="2">30S ribosomal protein S10</fullName>
    </alternativeName>
</protein>
<reference key="1">
    <citation type="journal article" date="1997" name="Nature">
        <title>The complete genome sequence of the gastric pathogen Helicobacter pylori.</title>
        <authorList>
            <person name="Tomb J.-F."/>
            <person name="White O."/>
            <person name="Kerlavage A.R."/>
            <person name="Clayton R.A."/>
            <person name="Sutton G.G."/>
            <person name="Fleischmann R.D."/>
            <person name="Ketchum K.A."/>
            <person name="Klenk H.-P."/>
            <person name="Gill S.R."/>
            <person name="Dougherty B.A."/>
            <person name="Nelson K.E."/>
            <person name="Quackenbush J."/>
            <person name="Zhou L."/>
            <person name="Kirkness E.F."/>
            <person name="Peterson S.N."/>
            <person name="Loftus B.J."/>
            <person name="Richardson D.L."/>
            <person name="Dodson R.J."/>
            <person name="Khalak H.G."/>
            <person name="Glodek A."/>
            <person name="McKenney K."/>
            <person name="FitzGerald L.M."/>
            <person name="Lee N."/>
            <person name="Adams M.D."/>
            <person name="Hickey E.K."/>
            <person name="Berg D.E."/>
            <person name="Gocayne J.D."/>
            <person name="Utterback T.R."/>
            <person name="Peterson J.D."/>
            <person name="Kelley J.M."/>
            <person name="Cotton M.D."/>
            <person name="Weidman J.F."/>
            <person name="Fujii C."/>
            <person name="Bowman C."/>
            <person name="Watthey L."/>
            <person name="Wallin E."/>
            <person name="Hayes W.S."/>
            <person name="Borodovsky M."/>
            <person name="Karp P.D."/>
            <person name="Smith H.O."/>
            <person name="Fraser C.M."/>
            <person name="Venter J.C."/>
        </authorList>
    </citation>
    <scope>NUCLEOTIDE SEQUENCE [LARGE SCALE GENOMIC DNA]</scope>
    <source>
        <strain>ATCC 700392 / 26695</strain>
    </source>
</reference>
<feature type="chain" id="PRO_0000146539" description="Small ribosomal subunit protein uS10">
    <location>
        <begin position="1"/>
        <end position="104"/>
    </location>
</feature>
<proteinExistence type="inferred from homology"/>
<sequence>MEKIRLKLKAYDHRVLDRSVVAIVEAVKRSGSEIRGPIPLPTKNKRYTVLRSPHVNKDSREQFEIRVYSRLIDIISATPETVDSLMKLDLAPEVDVEVTSMETK</sequence>